<proteinExistence type="inferred from homology"/>
<feature type="chain" id="PRO_1000061701" description="Coenzyme PQQ synthesis protein A">
    <location>
        <begin position="1"/>
        <end position="23"/>
    </location>
</feature>
<feature type="cross-link" description="Pyrroloquinoline quinone (Glu-Tyr)" evidence="1">
    <location>
        <begin position="15"/>
        <end position="19"/>
    </location>
</feature>
<evidence type="ECO:0000255" key="1">
    <source>
        <dbReference type="HAMAP-Rule" id="MF_00656"/>
    </source>
</evidence>
<reference key="1">
    <citation type="submission" date="2007-04" db="EMBL/GenBank/DDBJ databases">
        <title>Complete sequence of Pseudomonas mendocina ymp.</title>
        <authorList>
            <consortium name="US DOE Joint Genome Institute"/>
            <person name="Copeland A."/>
            <person name="Lucas S."/>
            <person name="Lapidus A."/>
            <person name="Barry K."/>
            <person name="Glavina del Rio T."/>
            <person name="Dalin E."/>
            <person name="Tice H."/>
            <person name="Pitluck S."/>
            <person name="Kiss H."/>
            <person name="Brettin T."/>
            <person name="Detter J.C."/>
            <person name="Bruce D."/>
            <person name="Han C."/>
            <person name="Schmutz J."/>
            <person name="Larimer F."/>
            <person name="Land M."/>
            <person name="Hauser L."/>
            <person name="Kyrpides N."/>
            <person name="Mikhailova N."/>
            <person name="Hersman L."/>
            <person name="Dubois J."/>
            <person name="Maurice P."/>
            <person name="Richardson P."/>
        </authorList>
    </citation>
    <scope>NUCLEOTIDE SEQUENCE [LARGE SCALE GENOMIC DNA]</scope>
    <source>
        <strain>ymp</strain>
    </source>
</reference>
<gene>
    <name evidence="1" type="primary">pqqA</name>
    <name type="ordered locus">Pmen_1965</name>
</gene>
<sequence>MWTKPAYTDLRIGFEVTMYFANR</sequence>
<accession>A4XTR0</accession>
<protein>
    <recommendedName>
        <fullName evidence="1">Coenzyme PQQ synthesis protein A</fullName>
    </recommendedName>
    <alternativeName>
        <fullName evidence="1">Pyrroloquinoline quinone biosynthesis protein A</fullName>
    </alternativeName>
</protein>
<organism>
    <name type="scientific">Ectopseudomonas mendocina (strain ymp)</name>
    <name type="common">Pseudomonas mendocina</name>
    <dbReference type="NCBI Taxonomy" id="399739"/>
    <lineage>
        <taxon>Bacteria</taxon>
        <taxon>Pseudomonadati</taxon>
        <taxon>Pseudomonadota</taxon>
        <taxon>Gammaproteobacteria</taxon>
        <taxon>Pseudomonadales</taxon>
        <taxon>Pseudomonadaceae</taxon>
        <taxon>Ectopseudomonas</taxon>
    </lineage>
</organism>
<keyword id="KW-0884">PQQ biosynthesis</keyword>
<dbReference type="EMBL" id="CP000680">
    <property type="protein sequence ID" value="ABP84726.1"/>
    <property type="molecule type" value="Genomic_DNA"/>
</dbReference>
<dbReference type="STRING" id="399739.Pmen_1965"/>
<dbReference type="KEGG" id="pmy:Pmen_1965"/>
<dbReference type="HOGENOM" id="CLU_219131_1_0_6"/>
<dbReference type="UniPathway" id="UPA00539"/>
<dbReference type="GO" id="GO:0018189">
    <property type="term" value="P:pyrroloquinoline quinone biosynthetic process"/>
    <property type="evidence" value="ECO:0007669"/>
    <property type="project" value="UniProtKB-UniRule"/>
</dbReference>
<dbReference type="HAMAP" id="MF_00656">
    <property type="entry name" value="PQQ_syn_PqqA"/>
    <property type="match status" value="1"/>
</dbReference>
<dbReference type="InterPro" id="IPR011725">
    <property type="entry name" value="PQQ_synth_PqqA"/>
</dbReference>
<dbReference type="NCBIfam" id="TIGR02107">
    <property type="entry name" value="PQQ_syn_pqqA"/>
    <property type="match status" value="1"/>
</dbReference>
<dbReference type="Pfam" id="PF08042">
    <property type="entry name" value="PqqA"/>
    <property type="match status" value="1"/>
</dbReference>
<comment type="function">
    <text evidence="1">Required for coenzyme pyrroloquinoline quinone (PQQ) biosynthesis. PQQ is probably formed by cross-linking a specific glutamate to a specific tyrosine residue and excising these residues from the peptide.</text>
</comment>
<comment type="pathway">
    <text evidence="1">Cofactor biosynthesis; pyrroloquinoline quinone biosynthesis.</text>
</comment>
<comment type="similarity">
    <text evidence="1">Belongs to the PqqA family.</text>
</comment>
<name>PQQA_ECTM1</name>